<organism>
    <name type="scientific">Yersinia pestis (strain Pestoides F)</name>
    <dbReference type="NCBI Taxonomy" id="386656"/>
    <lineage>
        <taxon>Bacteria</taxon>
        <taxon>Pseudomonadati</taxon>
        <taxon>Pseudomonadota</taxon>
        <taxon>Gammaproteobacteria</taxon>
        <taxon>Enterobacterales</taxon>
        <taxon>Yersiniaceae</taxon>
        <taxon>Yersinia</taxon>
    </lineage>
</organism>
<evidence type="ECO:0000255" key="1">
    <source>
        <dbReference type="HAMAP-Rule" id="MF_01693"/>
    </source>
</evidence>
<protein>
    <recommendedName>
        <fullName evidence="1">8-amino-7-oxononanoate synthase</fullName>
        <shortName evidence="1">AONS</shortName>
        <ecNumber evidence="1">2.3.1.47</ecNumber>
    </recommendedName>
    <alternativeName>
        <fullName evidence="1">7-keto-8-amino-pelargonic acid synthase</fullName>
        <shortName evidence="1">7-KAP synthase</shortName>
        <shortName evidence="1">KAPA synthase</shortName>
    </alternativeName>
    <alternativeName>
        <fullName evidence="1">8-amino-7-ketopelargonate synthase</fullName>
    </alternativeName>
</protein>
<reference key="1">
    <citation type="submission" date="2007-02" db="EMBL/GenBank/DDBJ databases">
        <title>Complete sequence of chromosome of Yersinia pestis Pestoides F.</title>
        <authorList>
            <consortium name="US DOE Joint Genome Institute"/>
            <person name="Copeland A."/>
            <person name="Lucas S."/>
            <person name="Lapidus A."/>
            <person name="Barry K."/>
            <person name="Detter J.C."/>
            <person name="Glavina del Rio T."/>
            <person name="Hammon N."/>
            <person name="Israni S."/>
            <person name="Dalin E."/>
            <person name="Tice H."/>
            <person name="Pitluck S."/>
            <person name="Di Bartolo G."/>
            <person name="Chain P."/>
            <person name="Malfatti S."/>
            <person name="Shin M."/>
            <person name="Vergez L."/>
            <person name="Schmutz J."/>
            <person name="Larimer F."/>
            <person name="Land M."/>
            <person name="Hauser L."/>
            <person name="Worsham P."/>
            <person name="Chu M."/>
            <person name="Bearden S."/>
            <person name="Garcia E."/>
            <person name="Richardson P."/>
        </authorList>
    </citation>
    <scope>NUCLEOTIDE SEQUENCE [LARGE SCALE GENOMIC DNA]</scope>
    <source>
        <strain>Pestoides F</strain>
    </source>
</reference>
<proteinExistence type="inferred from homology"/>
<keyword id="KW-0093">Biotin biosynthesis</keyword>
<keyword id="KW-0663">Pyridoxal phosphate</keyword>
<keyword id="KW-0808">Transferase</keyword>
<feature type="chain" id="PRO_0000381159" description="8-amino-7-oxononanoate synthase">
    <location>
        <begin position="1"/>
        <end position="383"/>
    </location>
</feature>
<feature type="binding site" evidence="1">
    <location>
        <position position="21"/>
    </location>
    <ligand>
        <name>substrate</name>
    </ligand>
</feature>
<feature type="binding site" evidence="1">
    <location>
        <begin position="108"/>
        <end position="109"/>
    </location>
    <ligand>
        <name>pyridoxal 5'-phosphate</name>
        <dbReference type="ChEBI" id="CHEBI:597326"/>
    </ligand>
</feature>
<feature type="binding site" evidence="1">
    <location>
        <position position="133"/>
    </location>
    <ligand>
        <name>substrate</name>
    </ligand>
</feature>
<feature type="binding site" evidence="1">
    <location>
        <position position="179"/>
    </location>
    <ligand>
        <name>pyridoxal 5'-phosphate</name>
        <dbReference type="ChEBI" id="CHEBI:597326"/>
    </ligand>
</feature>
<feature type="binding site" evidence="1">
    <location>
        <position position="207"/>
    </location>
    <ligand>
        <name>pyridoxal 5'-phosphate</name>
        <dbReference type="ChEBI" id="CHEBI:597326"/>
    </ligand>
</feature>
<feature type="binding site" evidence="1">
    <location>
        <position position="233"/>
    </location>
    <ligand>
        <name>pyridoxal 5'-phosphate</name>
        <dbReference type="ChEBI" id="CHEBI:597326"/>
    </ligand>
</feature>
<feature type="binding site" evidence="1">
    <location>
        <position position="350"/>
    </location>
    <ligand>
        <name>substrate</name>
    </ligand>
</feature>
<feature type="modified residue" description="N6-(pyridoxal phosphate)lysine" evidence="1">
    <location>
        <position position="236"/>
    </location>
</feature>
<comment type="function">
    <text evidence="1">Catalyzes the decarboxylative condensation of pimeloyl-[acyl-carrier protein] and L-alanine to produce 8-amino-7-oxononanoate (AON), [acyl-carrier protein], and carbon dioxide.</text>
</comment>
<comment type="catalytic activity">
    <reaction evidence="1">
        <text>6-carboxyhexanoyl-[ACP] + L-alanine + H(+) = (8S)-8-amino-7-oxononanoate + holo-[ACP] + CO2</text>
        <dbReference type="Rhea" id="RHEA:42288"/>
        <dbReference type="Rhea" id="RHEA-COMP:9685"/>
        <dbReference type="Rhea" id="RHEA-COMP:9955"/>
        <dbReference type="ChEBI" id="CHEBI:15378"/>
        <dbReference type="ChEBI" id="CHEBI:16526"/>
        <dbReference type="ChEBI" id="CHEBI:57972"/>
        <dbReference type="ChEBI" id="CHEBI:64479"/>
        <dbReference type="ChEBI" id="CHEBI:78846"/>
        <dbReference type="ChEBI" id="CHEBI:149468"/>
        <dbReference type="EC" id="2.3.1.47"/>
    </reaction>
</comment>
<comment type="cofactor">
    <cofactor evidence="1">
        <name>pyridoxal 5'-phosphate</name>
        <dbReference type="ChEBI" id="CHEBI:597326"/>
    </cofactor>
</comment>
<comment type="pathway">
    <text evidence="1">Cofactor biosynthesis; biotin biosynthesis.</text>
</comment>
<comment type="subunit">
    <text evidence="1">Homodimer.</text>
</comment>
<comment type="similarity">
    <text evidence="1">Belongs to the class-II pyridoxal-phosphate-dependent aminotransferase family. BioF subfamily.</text>
</comment>
<dbReference type="EC" id="2.3.1.47" evidence="1"/>
<dbReference type="EMBL" id="CP000668">
    <property type="protein sequence ID" value="ABP40917.1"/>
    <property type="molecule type" value="Genomic_DNA"/>
</dbReference>
<dbReference type="RefSeq" id="WP_002210763.1">
    <property type="nucleotide sequence ID" value="NZ_CP009715.1"/>
</dbReference>
<dbReference type="SMR" id="A4TNQ5"/>
<dbReference type="GeneID" id="57977291"/>
<dbReference type="KEGG" id="ypp:YPDSF_2545"/>
<dbReference type="PATRIC" id="fig|386656.14.peg.4063"/>
<dbReference type="UniPathway" id="UPA00078"/>
<dbReference type="GO" id="GO:0008710">
    <property type="term" value="F:8-amino-7-oxononanoate synthase activity"/>
    <property type="evidence" value="ECO:0007669"/>
    <property type="project" value="UniProtKB-UniRule"/>
</dbReference>
<dbReference type="GO" id="GO:0030170">
    <property type="term" value="F:pyridoxal phosphate binding"/>
    <property type="evidence" value="ECO:0007669"/>
    <property type="project" value="UniProtKB-UniRule"/>
</dbReference>
<dbReference type="GO" id="GO:0009102">
    <property type="term" value="P:biotin biosynthetic process"/>
    <property type="evidence" value="ECO:0007669"/>
    <property type="project" value="UniProtKB-UniRule"/>
</dbReference>
<dbReference type="Gene3D" id="3.90.1150.10">
    <property type="entry name" value="Aspartate Aminotransferase, domain 1"/>
    <property type="match status" value="1"/>
</dbReference>
<dbReference type="Gene3D" id="3.40.640.10">
    <property type="entry name" value="Type I PLP-dependent aspartate aminotransferase-like (Major domain)"/>
    <property type="match status" value="1"/>
</dbReference>
<dbReference type="HAMAP" id="MF_01693">
    <property type="entry name" value="BioF_aminotrans_2"/>
    <property type="match status" value="1"/>
</dbReference>
<dbReference type="InterPro" id="IPR001917">
    <property type="entry name" value="Aminotrans_II_pyridoxalP_BS"/>
</dbReference>
<dbReference type="InterPro" id="IPR004839">
    <property type="entry name" value="Aminotransferase_I/II_large"/>
</dbReference>
<dbReference type="InterPro" id="IPR050087">
    <property type="entry name" value="AON_synthase_class-II"/>
</dbReference>
<dbReference type="InterPro" id="IPR004723">
    <property type="entry name" value="AONS_Archaea/Proteobacteria"/>
</dbReference>
<dbReference type="InterPro" id="IPR022834">
    <property type="entry name" value="AONS_Proteobacteria"/>
</dbReference>
<dbReference type="InterPro" id="IPR015424">
    <property type="entry name" value="PyrdxlP-dep_Trfase"/>
</dbReference>
<dbReference type="InterPro" id="IPR015421">
    <property type="entry name" value="PyrdxlP-dep_Trfase_major"/>
</dbReference>
<dbReference type="InterPro" id="IPR015422">
    <property type="entry name" value="PyrdxlP-dep_Trfase_small"/>
</dbReference>
<dbReference type="NCBIfam" id="TIGR00858">
    <property type="entry name" value="bioF"/>
    <property type="match status" value="1"/>
</dbReference>
<dbReference type="PANTHER" id="PTHR13693:SF100">
    <property type="entry name" value="8-AMINO-7-OXONONANOATE SYNTHASE"/>
    <property type="match status" value="1"/>
</dbReference>
<dbReference type="PANTHER" id="PTHR13693">
    <property type="entry name" value="CLASS II AMINOTRANSFERASE/8-AMINO-7-OXONONANOATE SYNTHASE"/>
    <property type="match status" value="1"/>
</dbReference>
<dbReference type="Pfam" id="PF00155">
    <property type="entry name" value="Aminotran_1_2"/>
    <property type="match status" value="1"/>
</dbReference>
<dbReference type="SUPFAM" id="SSF53383">
    <property type="entry name" value="PLP-dependent transferases"/>
    <property type="match status" value="1"/>
</dbReference>
<dbReference type="PROSITE" id="PS00599">
    <property type="entry name" value="AA_TRANSFER_CLASS_2"/>
    <property type="match status" value="1"/>
</dbReference>
<accession>A4TNQ5</accession>
<sequence>MSWQDKIAQGLQRRRDAAAYRTRQVNEGANGRWLQSGERQYLNFSSNDYLGLSQNDEVIAAWQQGARRYGVGSGGSGHVTGYSQPHARLEQQLADWLGYPRALLFISGYAANQAVLTALTDADDRILADKLSHASLLEAAAHSPAQLRRFQHNQPEALQNLLIKPCQGQTLVVTEGVFSMDGDSAPLAALQQQTSAAGGWLLVDDAHGIGVHGEGGRGSCWLQGVQPELLVVTFGKAFGLSGAAVLCQEPVAEYLLQYARHLIYSTAMPPAQACALQAALRQVQQGDALRQQLQQRIRQFRTAAAHLPLQLGASKTAIQPLLVGDNQQSLIWAEQLRAAGLWVTAIRPPTVPPGSARLRITLSAAHQPEDIDRLLEVLYGLCH</sequence>
<name>BIOF_YERPP</name>
<gene>
    <name evidence="1" type="primary">bioF</name>
    <name type="ordered locus">YPDSF_2545</name>
</gene>